<sequence>MNSKIFAVLLLLALLSCVLSDQYCPKSSITACKKMNIRNDCCKDDDCTGGSWCCATPCGNFCKYPTDRPGGKRAAGGKSCKTGYVY</sequence>
<evidence type="ECO:0000250" key="1"/>
<evidence type="ECO:0000255" key="2"/>
<evidence type="ECO:0000305" key="3"/>
<comment type="function">
    <text evidence="1">Has antibacterial activity.</text>
</comment>
<comment type="subcellular location">
    <subcellularLocation>
        <location evidence="1">Secreted</location>
    </subcellularLocation>
</comment>
<comment type="tissue specificity">
    <text>Expressed by the venom gland.</text>
</comment>
<comment type="PTM">
    <text evidence="3">Contains 5 disulfide bonds.</text>
</comment>
<comment type="similarity">
    <text evidence="3">Belongs to the venom protein 11 family. 01 (wap-1) subfamily.</text>
</comment>
<name>TXF13_LYCSI</name>
<accession>B6DD46</accession>
<feature type="signal peptide" evidence="2">
    <location>
        <begin position="1"/>
        <end position="20"/>
    </location>
</feature>
<feature type="chain" id="PRO_0000401889" description="U15-lycotoxin-Ls1d">
    <location>
        <begin position="21"/>
        <end position="86"/>
    </location>
</feature>
<feature type="domain" description="WAP">
    <location>
        <begin position="21"/>
        <end position="66"/>
    </location>
</feature>
<feature type="disulfide bond" evidence="1">
    <location>
        <begin position="24"/>
        <end position="54"/>
    </location>
</feature>
<feature type="disulfide bond" evidence="1">
    <location>
        <begin position="32"/>
        <end position="58"/>
    </location>
</feature>
<feature type="disulfide bond" evidence="1">
    <location>
        <begin position="41"/>
        <end position="53"/>
    </location>
</feature>
<feature type="disulfide bond" evidence="3">
    <location>
        <begin position="42"/>
        <end position="80"/>
    </location>
</feature>
<feature type="disulfide bond" evidence="1">
    <location>
        <begin position="47"/>
        <end position="62"/>
    </location>
</feature>
<proteinExistence type="evidence at transcript level"/>
<keyword id="KW-0044">Antibiotic</keyword>
<keyword id="KW-0929">Antimicrobial</keyword>
<keyword id="KW-1015">Disulfide bond</keyword>
<keyword id="KW-0964">Secreted</keyword>
<keyword id="KW-0732">Signal</keyword>
<keyword id="KW-0800">Toxin</keyword>
<dbReference type="EMBL" id="EU926130">
    <property type="protein sequence ID" value="ACI41462.1"/>
    <property type="molecule type" value="mRNA"/>
</dbReference>
<dbReference type="EMBL" id="FM864134">
    <property type="protein sequence ID" value="CAS03731.1"/>
    <property type="molecule type" value="mRNA"/>
</dbReference>
<dbReference type="SMR" id="B6DD46"/>
<dbReference type="ArachnoServer" id="AS001069">
    <property type="toxin name" value="U15-lycotoxin-Ls1d"/>
</dbReference>
<dbReference type="GO" id="GO:0005576">
    <property type="term" value="C:extracellular region"/>
    <property type="evidence" value="ECO:0007669"/>
    <property type="project" value="UniProtKB-SubCell"/>
</dbReference>
<dbReference type="GO" id="GO:0090729">
    <property type="term" value="F:toxin activity"/>
    <property type="evidence" value="ECO:0007669"/>
    <property type="project" value="UniProtKB-KW"/>
</dbReference>
<dbReference type="GO" id="GO:0042742">
    <property type="term" value="P:defense response to bacterium"/>
    <property type="evidence" value="ECO:0007669"/>
    <property type="project" value="UniProtKB-KW"/>
</dbReference>
<dbReference type="InterPro" id="IPR036645">
    <property type="entry name" value="Elafin-like_sf"/>
</dbReference>
<dbReference type="SUPFAM" id="SSF57256">
    <property type="entry name" value="Elafin-like"/>
    <property type="match status" value="1"/>
</dbReference>
<protein>
    <recommendedName>
        <fullName>U15-lycotoxin-Ls1d</fullName>
    </recommendedName>
    <alternativeName>
        <fullName>Toxin-like structure LSTX-N13</fullName>
    </alternativeName>
</protein>
<organism>
    <name type="scientific">Lycosa singoriensis</name>
    <name type="common">Wolf spider</name>
    <name type="synonym">Aranea singoriensis</name>
    <dbReference type="NCBI Taxonomy" id="434756"/>
    <lineage>
        <taxon>Eukaryota</taxon>
        <taxon>Metazoa</taxon>
        <taxon>Ecdysozoa</taxon>
        <taxon>Arthropoda</taxon>
        <taxon>Chelicerata</taxon>
        <taxon>Arachnida</taxon>
        <taxon>Araneae</taxon>
        <taxon>Araneomorphae</taxon>
        <taxon>Entelegynae</taxon>
        <taxon>Lycosoidea</taxon>
        <taxon>Lycosidae</taxon>
        <taxon>Lycosa</taxon>
    </lineage>
</organism>
<reference key="1">
    <citation type="journal article" date="2010" name="Zoology">
        <title>Transcriptome analysis of the venom glands of the Chinese wolf spider Lycosa singoriensis.</title>
        <authorList>
            <person name="Zhang Y."/>
            <person name="Chen J."/>
            <person name="Tang X."/>
            <person name="Wang F."/>
            <person name="Jiang L."/>
            <person name="Xiong X."/>
            <person name="Wang M."/>
            <person name="Rong M."/>
            <person name="Liu Z."/>
            <person name="Liang S."/>
        </authorList>
    </citation>
    <scope>NUCLEOTIDE SEQUENCE [LARGE SCALE MRNA]</scope>
    <source>
        <tissue>Venom gland</tissue>
    </source>
</reference>